<proteinExistence type="inferred from homology"/>
<protein>
    <recommendedName>
        <fullName evidence="1">Large ribosomal subunit protein uL5</fullName>
    </recommendedName>
    <alternativeName>
        <fullName evidence="2">50S ribosomal protein L5</fullName>
    </alternativeName>
</protein>
<organism>
    <name type="scientific">Lacticaseibacillus paracasei (strain ATCC 334 / BCRC 17002 / CCUG 31169 / CIP 107868 / KCTC 3260 / NRRL B-441)</name>
    <name type="common">Lactobacillus paracasei</name>
    <dbReference type="NCBI Taxonomy" id="321967"/>
    <lineage>
        <taxon>Bacteria</taxon>
        <taxon>Bacillati</taxon>
        <taxon>Bacillota</taxon>
        <taxon>Bacilli</taxon>
        <taxon>Lactobacillales</taxon>
        <taxon>Lactobacillaceae</taxon>
        <taxon>Lacticaseibacillus</taxon>
    </lineage>
</organism>
<sequence>MENRLEERYSKEIAPALVSKFNYKSTMQAPKIEKIVLNMGVGDATQNAKLLDEAVDELTLISGQHPLITKAKKSIAGFRLREGMPIGAKVTLRGERMYDFLDKLINVSLPRVRDFHGISPKSFDGRGNYTLGVKEQLIFPEIDYDKVNRVRGLDVVIVTTANTDEEALELLTQVGMPFAK</sequence>
<reference key="1">
    <citation type="journal article" date="2006" name="Proc. Natl. Acad. Sci. U.S.A.">
        <title>Comparative genomics of the lactic acid bacteria.</title>
        <authorList>
            <person name="Makarova K.S."/>
            <person name="Slesarev A."/>
            <person name="Wolf Y.I."/>
            <person name="Sorokin A."/>
            <person name="Mirkin B."/>
            <person name="Koonin E.V."/>
            <person name="Pavlov A."/>
            <person name="Pavlova N."/>
            <person name="Karamychev V."/>
            <person name="Polouchine N."/>
            <person name="Shakhova V."/>
            <person name="Grigoriev I."/>
            <person name="Lou Y."/>
            <person name="Rohksar D."/>
            <person name="Lucas S."/>
            <person name="Huang K."/>
            <person name="Goodstein D.M."/>
            <person name="Hawkins T."/>
            <person name="Plengvidhya V."/>
            <person name="Welker D."/>
            <person name="Hughes J."/>
            <person name="Goh Y."/>
            <person name="Benson A."/>
            <person name="Baldwin K."/>
            <person name="Lee J.-H."/>
            <person name="Diaz-Muniz I."/>
            <person name="Dosti B."/>
            <person name="Smeianov V."/>
            <person name="Wechter W."/>
            <person name="Barabote R."/>
            <person name="Lorca G."/>
            <person name="Altermann E."/>
            <person name="Barrangou R."/>
            <person name="Ganesan B."/>
            <person name="Xie Y."/>
            <person name="Rawsthorne H."/>
            <person name="Tamir D."/>
            <person name="Parker C."/>
            <person name="Breidt F."/>
            <person name="Broadbent J.R."/>
            <person name="Hutkins R."/>
            <person name="O'Sullivan D."/>
            <person name="Steele J."/>
            <person name="Unlu G."/>
            <person name="Saier M.H. Jr."/>
            <person name="Klaenhammer T."/>
            <person name="Richardson P."/>
            <person name="Kozyavkin S."/>
            <person name="Weimer B.C."/>
            <person name="Mills D.A."/>
        </authorList>
    </citation>
    <scope>NUCLEOTIDE SEQUENCE [LARGE SCALE GENOMIC DNA]</scope>
    <source>
        <strain>ATCC 334 / BCRC 17002 / CCUG 31169 / CIP 107868 / KCTC 3260 / NRRL B-441</strain>
    </source>
</reference>
<keyword id="KW-1185">Reference proteome</keyword>
<keyword id="KW-0687">Ribonucleoprotein</keyword>
<keyword id="KW-0689">Ribosomal protein</keyword>
<keyword id="KW-0694">RNA-binding</keyword>
<keyword id="KW-0699">rRNA-binding</keyword>
<keyword id="KW-0820">tRNA-binding</keyword>
<name>RL5_LACP3</name>
<dbReference type="EMBL" id="CP000423">
    <property type="protein sequence ID" value="ABJ71227.1"/>
    <property type="molecule type" value="Genomic_DNA"/>
</dbReference>
<dbReference type="RefSeq" id="WP_003567542.1">
    <property type="nucleotide sequence ID" value="NC_008526.1"/>
</dbReference>
<dbReference type="RefSeq" id="YP_807669.1">
    <property type="nucleotide sequence ID" value="NC_008526.1"/>
</dbReference>
<dbReference type="SMR" id="Q034Z5"/>
<dbReference type="STRING" id="321967.LSEI_2491"/>
<dbReference type="PaxDb" id="321967-LSEI_2491"/>
<dbReference type="GeneID" id="93270077"/>
<dbReference type="KEGG" id="lca:LSEI_2491"/>
<dbReference type="PATRIC" id="fig|321967.11.peg.2445"/>
<dbReference type="HOGENOM" id="CLU_061015_2_1_9"/>
<dbReference type="Proteomes" id="UP000001651">
    <property type="component" value="Chromosome"/>
</dbReference>
<dbReference type="GO" id="GO:1990904">
    <property type="term" value="C:ribonucleoprotein complex"/>
    <property type="evidence" value="ECO:0007669"/>
    <property type="project" value="UniProtKB-KW"/>
</dbReference>
<dbReference type="GO" id="GO:0005840">
    <property type="term" value="C:ribosome"/>
    <property type="evidence" value="ECO:0007669"/>
    <property type="project" value="UniProtKB-KW"/>
</dbReference>
<dbReference type="GO" id="GO:0019843">
    <property type="term" value="F:rRNA binding"/>
    <property type="evidence" value="ECO:0007669"/>
    <property type="project" value="UniProtKB-UniRule"/>
</dbReference>
<dbReference type="GO" id="GO:0003735">
    <property type="term" value="F:structural constituent of ribosome"/>
    <property type="evidence" value="ECO:0007669"/>
    <property type="project" value="InterPro"/>
</dbReference>
<dbReference type="GO" id="GO:0000049">
    <property type="term" value="F:tRNA binding"/>
    <property type="evidence" value="ECO:0007669"/>
    <property type="project" value="UniProtKB-UniRule"/>
</dbReference>
<dbReference type="GO" id="GO:0006412">
    <property type="term" value="P:translation"/>
    <property type="evidence" value="ECO:0007669"/>
    <property type="project" value="UniProtKB-UniRule"/>
</dbReference>
<dbReference type="FunFam" id="3.30.1440.10:FF:000001">
    <property type="entry name" value="50S ribosomal protein L5"/>
    <property type="match status" value="1"/>
</dbReference>
<dbReference type="Gene3D" id="3.30.1440.10">
    <property type="match status" value="1"/>
</dbReference>
<dbReference type="HAMAP" id="MF_01333_B">
    <property type="entry name" value="Ribosomal_uL5_B"/>
    <property type="match status" value="1"/>
</dbReference>
<dbReference type="InterPro" id="IPR002132">
    <property type="entry name" value="Ribosomal_uL5"/>
</dbReference>
<dbReference type="InterPro" id="IPR020930">
    <property type="entry name" value="Ribosomal_uL5_bac-type"/>
</dbReference>
<dbReference type="InterPro" id="IPR031309">
    <property type="entry name" value="Ribosomal_uL5_C"/>
</dbReference>
<dbReference type="InterPro" id="IPR020929">
    <property type="entry name" value="Ribosomal_uL5_CS"/>
</dbReference>
<dbReference type="InterPro" id="IPR022803">
    <property type="entry name" value="Ribosomal_uL5_dom_sf"/>
</dbReference>
<dbReference type="InterPro" id="IPR031310">
    <property type="entry name" value="Ribosomal_uL5_N"/>
</dbReference>
<dbReference type="NCBIfam" id="NF000585">
    <property type="entry name" value="PRK00010.1"/>
    <property type="match status" value="1"/>
</dbReference>
<dbReference type="PANTHER" id="PTHR11994">
    <property type="entry name" value="60S RIBOSOMAL PROTEIN L11-RELATED"/>
    <property type="match status" value="1"/>
</dbReference>
<dbReference type="Pfam" id="PF00281">
    <property type="entry name" value="Ribosomal_L5"/>
    <property type="match status" value="1"/>
</dbReference>
<dbReference type="Pfam" id="PF00673">
    <property type="entry name" value="Ribosomal_L5_C"/>
    <property type="match status" value="1"/>
</dbReference>
<dbReference type="PIRSF" id="PIRSF002161">
    <property type="entry name" value="Ribosomal_L5"/>
    <property type="match status" value="1"/>
</dbReference>
<dbReference type="SUPFAM" id="SSF55282">
    <property type="entry name" value="RL5-like"/>
    <property type="match status" value="1"/>
</dbReference>
<dbReference type="PROSITE" id="PS00358">
    <property type="entry name" value="RIBOSOMAL_L5"/>
    <property type="match status" value="1"/>
</dbReference>
<feature type="chain" id="PRO_1000052753" description="Large ribosomal subunit protein uL5">
    <location>
        <begin position="1"/>
        <end position="180"/>
    </location>
</feature>
<gene>
    <name evidence="1" type="primary">rplE</name>
    <name type="ordered locus">LSEI_2491</name>
</gene>
<comment type="function">
    <text evidence="1">This is one of the proteins that bind and probably mediate the attachment of the 5S RNA into the large ribosomal subunit, where it forms part of the central protuberance. In the 70S ribosome it contacts protein S13 of the 30S subunit (bridge B1b), connecting the 2 subunits; this bridge is implicated in subunit movement. Contacts the P site tRNA; the 5S rRNA and some of its associated proteins might help stabilize positioning of ribosome-bound tRNAs.</text>
</comment>
<comment type="subunit">
    <text evidence="1">Part of the 50S ribosomal subunit; part of the 5S rRNA/L5/L18/L25 subcomplex. Contacts the 5S rRNA and the P site tRNA. Forms a bridge to the 30S subunit in the 70S ribosome.</text>
</comment>
<comment type="similarity">
    <text evidence="1">Belongs to the universal ribosomal protein uL5 family.</text>
</comment>
<accession>Q034Z5</accession>
<evidence type="ECO:0000255" key="1">
    <source>
        <dbReference type="HAMAP-Rule" id="MF_01333"/>
    </source>
</evidence>
<evidence type="ECO:0000305" key="2"/>